<feature type="chain" id="PRO_0000369702" description="Ribosomal RNA small subunit methyltransferase C">
    <location>
        <begin position="1"/>
        <end position="343"/>
    </location>
</feature>
<keyword id="KW-0963">Cytoplasm</keyword>
<keyword id="KW-0489">Methyltransferase</keyword>
<keyword id="KW-0698">rRNA processing</keyword>
<keyword id="KW-0949">S-adenosyl-L-methionine</keyword>
<keyword id="KW-0808">Transferase</keyword>
<sequence length="343" mass="37650">MSAFTPASEVLLRHSDDFEQSRILFAGDLQDDLPARLDTAASRAHTQQFHHWQVLSRQMGDNARFSLVATANDVADCDTLIYYWPKNKPEAQFQLMNLLSLLPVGTDIFVVGENRSGVRSAEQMLADYAPLNKVDSARRCGLYFGRLEKQPVFDANKFWGEYNVDGLTVKTLPGVFSRDGLDVGSQLLLSTLTPHTKGKVLDVGCGAGVLSVAFARHSPKIRLTLCDVSAPAVEASRATLAANGIEGEVFASNVFSEVKGRFDMIISNPPFHDGMQTSLDAAQTLIRGAVRHLNSGGELRIVANAFLPYPDVLDETFGFHEVIAQTGRFKVYRAIMTRQAKKG</sequence>
<dbReference type="EC" id="2.1.1.172" evidence="1"/>
<dbReference type="EMBL" id="CP000970">
    <property type="protein sequence ID" value="ACB17604.1"/>
    <property type="molecule type" value="Genomic_DNA"/>
</dbReference>
<dbReference type="RefSeq" id="WP_001272340.1">
    <property type="nucleotide sequence ID" value="NC_010498.1"/>
</dbReference>
<dbReference type="SMR" id="B1LEH4"/>
<dbReference type="KEGG" id="ecm:EcSMS35_4918"/>
<dbReference type="HOGENOM" id="CLU_049581_0_1_6"/>
<dbReference type="Proteomes" id="UP000007011">
    <property type="component" value="Chromosome"/>
</dbReference>
<dbReference type="GO" id="GO:0005737">
    <property type="term" value="C:cytoplasm"/>
    <property type="evidence" value="ECO:0007669"/>
    <property type="project" value="UniProtKB-SubCell"/>
</dbReference>
<dbReference type="GO" id="GO:0052914">
    <property type="term" value="F:16S rRNA (guanine(1207)-N(2))-methyltransferase activity"/>
    <property type="evidence" value="ECO:0007669"/>
    <property type="project" value="UniProtKB-EC"/>
</dbReference>
<dbReference type="GO" id="GO:0003676">
    <property type="term" value="F:nucleic acid binding"/>
    <property type="evidence" value="ECO:0007669"/>
    <property type="project" value="InterPro"/>
</dbReference>
<dbReference type="CDD" id="cd02440">
    <property type="entry name" value="AdoMet_MTases"/>
    <property type="match status" value="1"/>
</dbReference>
<dbReference type="FunFam" id="3.40.50.150:FF:000058">
    <property type="entry name" value="Ribosomal RNA small subunit methyltransferase C"/>
    <property type="match status" value="1"/>
</dbReference>
<dbReference type="FunFam" id="3.40.50.150:FF:000063">
    <property type="entry name" value="Ribosomal RNA small subunit methyltransferase C"/>
    <property type="match status" value="1"/>
</dbReference>
<dbReference type="Gene3D" id="3.40.50.150">
    <property type="entry name" value="Vaccinia Virus protein VP39"/>
    <property type="match status" value="2"/>
</dbReference>
<dbReference type="HAMAP" id="MF_01862">
    <property type="entry name" value="16SrRNA_methyltr_C"/>
    <property type="match status" value="1"/>
</dbReference>
<dbReference type="InterPro" id="IPR002052">
    <property type="entry name" value="DNA_methylase_N6_adenine_CS"/>
</dbReference>
<dbReference type="InterPro" id="IPR013675">
    <property type="entry name" value="Mtase_sm_N"/>
</dbReference>
<dbReference type="InterPro" id="IPR023543">
    <property type="entry name" value="rRNA_ssu_MeTfrase_C"/>
</dbReference>
<dbReference type="InterPro" id="IPR046977">
    <property type="entry name" value="RsmC/RlmG"/>
</dbReference>
<dbReference type="InterPro" id="IPR029063">
    <property type="entry name" value="SAM-dependent_MTases_sf"/>
</dbReference>
<dbReference type="InterPro" id="IPR007848">
    <property type="entry name" value="Small_mtfrase_dom"/>
</dbReference>
<dbReference type="NCBIfam" id="NF007023">
    <property type="entry name" value="PRK09489.1"/>
    <property type="match status" value="1"/>
</dbReference>
<dbReference type="PANTHER" id="PTHR47816">
    <property type="entry name" value="RIBOSOMAL RNA SMALL SUBUNIT METHYLTRANSFERASE C"/>
    <property type="match status" value="1"/>
</dbReference>
<dbReference type="PANTHER" id="PTHR47816:SF4">
    <property type="entry name" value="RIBOSOMAL RNA SMALL SUBUNIT METHYLTRANSFERASE C"/>
    <property type="match status" value="1"/>
</dbReference>
<dbReference type="Pfam" id="PF05175">
    <property type="entry name" value="MTS"/>
    <property type="match status" value="1"/>
</dbReference>
<dbReference type="Pfam" id="PF08468">
    <property type="entry name" value="MTS_N"/>
    <property type="match status" value="1"/>
</dbReference>
<dbReference type="SUPFAM" id="SSF53335">
    <property type="entry name" value="S-adenosyl-L-methionine-dependent methyltransferases"/>
    <property type="match status" value="1"/>
</dbReference>
<reference key="1">
    <citation type="journal article" date="2008" name="J. Bacteriol.">
        <title>Insights into the environmental resistance gene pool from the genome sequence of the multidrug-resistant environmental isolate Escherichia coli SMS-3-5.</title>
        <authorList>
            <person name="Fricke W.F."/>
            <person name="Wright M.S."/>
            <person name="Lindell A.H."/>
            <person name="Harkins D.M."/>
            <person name="Baker-Austin C."/>
            <person name="Ravel J."/>
            <person name="Stepanauskas R."/>
        </authorList>
    </citation>
    <scope>NUCLEOTIDE SEQUENCE [LARGE SCALE GENOMIC DNA]</scope>
    <source>
        <strain>SMS-3-5 / SECEC</strain>
    </source>
</reference>
<accession>B1LEH4</accession>
<evidence type="ECO:0000255" key="1">
    <source>
        <dbReference type="HAMAP-Rule" id="MF_01862"/>
    </source>
</evidence>
<comment type="function">
    <text evidence="1">Specifically methylates the guanine in position 1207 of 16S rRNA in the 30S particle.</text>
</comment>
<comment type="catalytic activity">
    <reaction evidence="1">
        <text>guanosine(1207) in 16S rRNA + S-adenosyl-L-methionine = N(2)-methylguanosine(1207) in 16S rRNA + S-adenosyl-L-homocysteine + H(+)</text>
        <dbReference type="Rhea" id="RHEA:42736"/>
        <dbReference type="Rhea" id="RHEA-COMP:10213"/>
        <dbReference type="Rhea" id="RHEA-COMP:10214"/>
        <dbReference type="ChEBI" id="CHEBI:15378"/>
        <dbReference type="ChEBI" id="CHEBI:57856"/>
        <dbReference type="ChEBI" id="CHEBI:59789"/>
        <dbReference type="ChEBI" id="CHEBI:74269"/>
        <dbReference type="ChEBI" id="CHEBI:74481"/>
        <dbReference type="EC" id="2.1.1.172"/>
    </reaction>
</comment>
<comment type="subunit">
    <text evidence="1">Monomer.</text>
</comment>
<comment type="subcellular location">
    <subcellularLocation>
        <location evidence="1">Cytoplasm</location>
    </subcellularLocation>
</comment>
<comment type="similarity">
    <text evidence="1">Belongs to the methyltransferase superfamily. RsmC family.</text>
</comment>
<name>RSMC_ECOSM</name>
<gene>
    <name evidence="1" type="primary">rsmC</name>
    <name type="ordered locus">EcSMS35_4918</name>
</gene>
<proteinExistence type="inferred from homology"/>
<organism>
    <name type="scientific">Escherichia coli (strain SMS-3-5 / SECEC)</name>
    <dbReference type="NCBI Taxonomy" id="439855"/>
    <lineage>
        <taxon>Bacteria</taxon>
        <taxon>Pseudomonadati</taxon>
        <taxon>Pseudomonadota</taxon>
        <taxon>Gammaproteobacteria</taxon>
        <taxon>Enterobacterales</taxon>
        <taxon>Enterobacteriaceae</taxon>
        <taxon>Escherichia</taxon>
    </lineage>
</organism>
<protein>
    <recommendedName>
        <fullName evidence="1">Ribosomal RNA small subunit methyltransferase C</fullName>
        <ecNumber evidence="1">2.1.1.172</ecNumber>
    </recommendedName>
    <alternativeName>
        <fullName evidence="1">16S rRNA m2G1207 methyltransferase</fullName>
    </alternativeName>
    <alternativeName>
        <fullName evidence="1">rRNA (guanine-N(2)-)-methyltransferase RsmC</fullName>
    </alternativeName>
</protein>